<name>YIHI_SALNS</name>
<evidence type="ECO:0000255" key="1">
    <source>
        <dbReference type="HAMAP-Rule" id="MF_01058"/>
    </source>
</evidence>
<evidence type="ECO:0000256" key="2">
    <source>
        <dbReference type="SAM" id="MobiDB-lite"/>
    </source>
</evidence>
<sequence>MKKPTSAPRSKAFGKQRRKTREELNQEARDRKRLKKHRGHAPGSRAAGGNSASGGGNQNQQKDPRIGSKTPVPLGVTEKVTQQHKPKSEKPMLSPQAELDLLETDERLDALLERLEAGETLSAEDQAWVDAKLDRIDELMQKLGLSYDDDEEDDEEDEKQEDMMRLLRGGN</sequence>
<comment type="function">
    <text evidence="1">A GTPase-activating protein (GAP) that modifies Der/EngA GTPase function. May play a role in ribosome biogenesis.</text>
</comment>
<comment type="subunit">
    <text evidence="1">Interacts with Der.</text>
</comment>
<comment type="similarity">
    <text evidence="1">Belongs to the YihI family.</text>
</comment>
<accession>B4SZ99</accession>
<reference key="1">
    <citation type="journal article" date="2011" name="J. Bacteriol.">
        <title>Comparative genomics of 28 Salmonella enterica isolates: evidence for CRISPR-mediated adaptive sublineage evolution.</title>
        <authorList>
            <person name="Fricke W.F."/>
            <person name="Mammel M.K."/>
            <person name="McDermott P.F."/>
            <person name="Tartera C."/>
            <person name="White D.G."/>
            <person name="Leclerc J.E."/>
            <person name="Ravel J."/>
            <person name="Cebula T.A."/>
        </authorList>
    </citation>
    <scope>NUCLEOTIDE SEQUENCE [LARGE SCALE GENOMIC DNA]</scope>
    <source>
        <strain>SL254</strain>
    </source>
</reference>
<keyword id="KW-0343">GTPase activation</keyword>
<keyword id="KW-0690">Ribosome biogenesis</keyword>
<proteinExistence type="inferred from homology"/>
<feature type="chain" id="PRO_1000136392" description="Der GTPase-activating protein YihI">
    <location>
        <begin position="1"/>
        <end position="171"/>
    </location>
</feature>
<feature type="region of interest" description="Disordered" evidence="2">
    <location>
        <begin position="1"/>
        <end position="99"/>
    </location>
</feature>
<feature type="region of interest" description="Disordered" evidence="2">
    <location>
        <begin position="145"/>
        <end position="171"/>
    </location>
</feature>
<feature type="compositionally biased region" description="Basic and acidic residues" evidence="2">
    <location>
        <begin position="20"/>
        <end position="30"/>
    </location>
</feature>
<feature type="compositionally biased region" description="Basic residues" evidence="2">
    <location>
        <begin position="31"/>
        <end position="40"/>
    </location>
</feature>
<feature type="compositionally biased region" description="Acidic residues" evidence="2">
    <location>
        <begin position="147"/>
        <end position="160"/>
    </location>
</feature>
<gene>
    <name evidence="1" type="primary">yihI</name>
    <name type="ordered locus">SNSL254_A4285</name>
</gene>
<protein>
    <recommendedName>
        <fullName evidence="1">Der GTPase-activating protein YihI</fullName>
    </recommendedName>
</protein>
<organism>
    <name type="scientific">Salmonella newport (strain SL254)</name>
    <dbReference type="NCBI Taxonomy" id="423368"/>
    <lineage>
        <taxon>Bacteria</taxon>
        <taxon>Pseudomonadati</taxon>
        <taxon>Pseudomonadota</taxon>
        <taxon>Gammaproteobacteria</taxon>
        <taxon>Enterobacterales</taxon>
        <taxon>Enterobacteriaceae</taxon>
        <taxon>Salmonella</taxon>
    </lineage>
</organism>
<dbReference type="EMBL" id="CP001113">
    <property type="protein sequence ID" value="ACF64248.1"/>
    <property type="molecule type" value="Genomic_DNA"/>
</dbReference>
<dbReference type="RefSeq" id="WP_000743292.1">
    <property type="nucleotide sequence ID" value="NZ_CCMR01000001.1"/>
</dbReference>
<dbReference type="SMR" id="B4SZ99"/>
<dbReference type="KEGG" id="see:SNSL254_A4285"/>
<dbReference type="HOGENOM" id="CLU_094104_2_0_6"/>
<dbReference type="Proteomes" id="UP000008824">
    <property type="component" value="Chromosome"/>
</dbReference>
<dbReference type="GO" id="GO:0005096">
    <property type="term" value="F:GTPase activator activity"/>
    <property type="evidence" value="ECO:0007669"/>
    <property type="project" value="UniProtKB-KW"/>
</dbReference>
<dbReference type="GO" id="GO:0042254">
    <property type="term" value="P:ribosome biogenesis"/>
    <property type="evidence" value="ECO:0007669"/>
    <property type="project" value="UniProtKB-KW"/>
</dbReference>
<dbReference type="HAMAP" id="MF_01058">
    <property type="entry name" value="GAP_YihI"/>
    <property type="match status" value="1"/>
</dbReference>
<dbReference type="InterPro" id="IPR007336">
    <property type="entry name" value="YihI"/>
</dbReference>
<dbReference type="NCBIfam" id="NF003560">
    <property type="entry name" value="PRK05244.1-1"/>
    <property type="match status" value="1"/>
</dbReference>
<dbReference type="Pfam" id="PF04220">
    <property type="entry name" value="YihI"/>
    <property type="match status" value="1"/>
</dbReference>